<dbReference type="EMBL" id="CP002535">
    <property type="protein sequence ID" value="AEE93884.1"/>
    <property type="molecule type" value="Genomic_DNA"/>
</dbReference>
<dbReference type="SMR" id="F4B991"/>
<dbReference type="KEGG" id="aho:Ahos_0998"/>
<dbReference type="eggNOG" id="arCOG05888">
    <property type="taxonomic scope" value="Archaea"/>
</dbReference>
<dbReference type="HOGENOM" id="CLU_2929990_0_0_2"/>
<dbReference type="OrthoDB" id="33867at2157"/>
<dbReference type="Proteomes" id="UP000008458">
    <property type="component" value="Chromosome"/>
</dbReference>
<dbReference type="GO" id="GO:0005737">
    <property type="term" value="C:cytoplasm"/>
    <property type="evidence" value="ECO:0007669"/>
    <property type="project" value="UniProtKB-SubCell"/>
</dbReference>
<dbReference type="GO" id="GO:0003677">
    <property type="term" value="F:DNA binding"/>
    <property type="evidence" value="ECO:0007669"/>
    <property type="project" value="UniProtKB-KW"/>
</dbReference>
<dbReference type="GO" id="GO:0004521">
    <property type="term" value="F:RNA endonuclease activity"/>
    <property type="evidence" value="ECO:0007669"/>
    <property type="project" value="InterPro"/>
</dbReference>
<dbReference type="Gene3D" id="2.40.50.40">
    <property type="match status" value="1"/>
</dbReference>
<dbReference type="InterPro" id="IPR016197">
    <property type="entry name" value="Chromo-like_dom_sf"/>
</dbReference>
<dbReference type="InterPro" id="IPR003212">
    <property type="entry name" value="DNA-bd_7a-e_arc"/>
</dbReference>
<dbReference type="NCBIfam" id="NF045555">
    <property type="entry name" value="Sul7d"/>
    <property type="match status" value="1"/>
</dbReference>
<dbReference type="Pfam" id="PF02294">
    <property type="entry name" value="7kD_DNA_binding"/>
    <property type="match status" value="1"/>
</dbReference>
<dbReference type="SUPFAM" id="SSF54160">
    <property type="entry name" value="Chromo domain-like"/>
    <property type="match status" value="1"/>
</dbReference>
<keyword id="KW-0963">Cytoplasm</keyword>
<keyword id="KW-0238">DNA-binding</keyword>
<accession>F4B991</accession>
<evidence type="ECO:0000250" key="1">
    <source>
        <dbReference type="UniProtKB" id="P61990"/>
    </source>
</evidence>
<evidence type="ECO:0000256" key="2">
    <source>
        <dbReference type="SAM" id="MobiDB-lite"/>
    </source>
</evidence>
<evidence type="ECO:0000269" key="3">
    <source>
    </source>
</evidence>
<evidence type="ECO:0000303" key="4">
    <source>
    </source>
</evidence>
<evidence type="ECO:0000305" key="5"/>
<evidence type="ECO:0000312" key="6">
    <source>
        <dbReference type="EMBL" id="AEE93884.1"/>
    </source>
</evidence>
<reference key="1">
    <citation type="journal article" date="2011" name="Extremophiles">
        <title>Genomic analysis of Acidianus hospitalis W1 a host for studying crenarchaeal virus and plasmid life cycles.</title>
        <authorList>
            <person name="You X.Y."/>
            <person name="Liu C."/>
            <person name="Wang S.Y."/>
            <person name="Jiang C.Y."/>
            <person name="Shah S.A."/>
            <person name="Prangishvili D."/>
            <person name="She Q."/>
            <person name="Liu S.J."/>
            <person name="Garrett R.A."/>
        </authorList>
    </citation>
    <scope>NUCLEOTIDE SEQUENCE [LARGE SCALE GENOMIC DNA]</scope>
    <source>
        <strain>W1</strain>
    </source>
</reference>
<reference key="2">
    <citation type="journal article" date="2016" name="Sci. Rep.">
        <title>The archaeal '7 kDa DNA-binding' proteins: extended characterization of an old gifted family.</title>
        <authorList>
            <person name="Kalichuk V."/>
            <person name="Behar G."/>
            <person name="Renodon-Corniere A."/>
            <person name="Danovski G."/>
            <person name="Obal G."/>
            <person name="Barbet J."/>
            <person name="Mouratou B."/>
            <person name="Pecorari F."/>
        </authorList>
    </citation>
    <scope>DNA-BINDING</scope>
    <scope>BIOPHYSICOCHEMICAL PROPERTIES</scope>
    <scope>SUBUNIT</scope>
    <scope>SUBCELLULAR LOCATION</scope>
    <scope>NOMENCLATURE</scope>
</reference>
<feature type="chain" id="PRO_0000439045" description="DNA-binding protein 7a">
    <location>
        <begin position="1"/>
        <end position="61"/>
    </location>
</feature>
<feature type="region of interest" description="Disordered" evidence="2">
    <location>
        <begin position="37"/>
        <end position="61"/>
    </location>
</feature>
<feature type="compositionally biased region" description="Basic and acidic residues" evidence="2">
    <location>
        <begin position="45"/>
        <end position="61"/>
    </location>
</feature>
<proteinExistence type="evidence at protein level"/>
<name>DN7A_ACIHW</name>
<comment type="function">
    <text evidence="1">Can constrain negative DNA supercoils. May be involved in maintaining the integrity of the genome at high temperature.</text>
</comment>
<comment type="biophysicochemical properties">
    <phDependence>
        <text evidence="3">Highly stable from pH 0 to pH 12.</text>
    </phDependence>
    <temperatureDependence>
        <text evidence="3">Hyperthermostable.</text>
    </temperatureDependence>
</comment>
<comment type="subunit">
    <text evidence="3">Monomer.</text>
</comment>
<comment type="subcellular location">
    <subcellularLocation>
        <location evidence="3">Cytoplasm</location>
    </subcellularLocation>
</comment>
<comment type="similarity">
    <text evidence="5">Belongs to the 7 kDa DNA-binding/endoribonuclease P2 family.</text>
</comment>
<organism>
    <name type="scientific">Acidianus hospitalis (strain W1)</name>
    <dbReference type="NCBI Taxonomy" id="933801"/>
    <lineage>
        <taxon>Archaea</taxon>
        <taxon>Thermoproteota</taxon>
        <taxon>Thermoprotei</taxon>
        <taxon>Sulfolobales</taxon>
        <taxon>Sulfolobaceae</taxon>
        <taxon>Acidianus</taxon>
    </lineage>
</organism>
<sequence length="61" mass="7037">MTTVKFKYKGEEKEVDISKIKKVWRVGKMISFTYDDNGKTGRGAVSEKDAPKELLEKLEKK</sequence>
<protein>
    <recommendedName>
        <fullName evidence="5">DNA-binding protein 7a</fullName>
    </recommendedName>
    <alternativeName>
        <fullName evidence="5">7 kDa DNA-binding protein a</fullName>
    </alternativeName>
    <alternativeName>
        <fullName evidence="4">Aho7a</fullName>
    </alternativeName>
</protein>
<gene>
    <name evidence="6" type="ordered locus">Ahos_0998</name>
</gene>